<proteinExistence type="inferred from homology"/>
<feature type="chain" id="PRO_1000005898" description="DNA-directed RNA polymerase subunit omega">
    <location>
        <begin position="1"/>
        <end position="67"/>
    </location>
</feature>
<accession>Q0BHF4</accession>
<dbReference type="EC" id="2.7.7.6" evidence="1"/>
<dbReference type="EMBL" id="CP000440">
    <property type="protein sequence ID" value="ABI86419.1"/>
    <property type="molecule type" value="Genomic_DNA"/>
</dbReference>
<dbReference type="RefSeq" id="WP_006750851.1">
    <property type="nucleotide sequence ID" value="NZ_CP009798.1"/>
</dbReference>
<dbReference type="SMR" id="Q0BHF4"/>
<dbReference type="GeneID" id="93083732"/>
<dbReference type="KEGG" id="bam:Bamb_0860"/>
<dbReference type="PATRIC" id="fig|339670.21.peg.723"/>
<dbReference type="eggNOG" id="COG1758">
    <property type="taxonomic scope" value="Bacteria"/>
</dbReference>
<dbReference type="Proteomes" id="UP000000662">
    <property type="component" value="Chromosome 1"/>
</dbReference>
<dbReference type="GO" id="GO:0000428">
    <property type="term" value="C:DNA-directed RNA polymerase complex"/>
    <property type="evidence" value="ECO:0007669"/>
    <property type="project" value="UniProtKB-KW"/>
</dbReference>
<dbReference type="GO" id="GO:0003677">
    <property type="term" value="F:DNA binding"/>
    <property type="evidence" value="ECO:0007669"/>
    <property type="project" value="UniProtKB-UniRule"/>
</dbReference>
<dbReference type="GO" id="GO:0003899">
    <property type="term" value="F:DNA-directed RNA polymerase activity"/>
    <property type="evidence" value="ECO:0007669"/>
    <property type="project" value="UniProtKB-UniRule"/>
</dbReference>
<dbReference type="GO" id="GO:0006351">
    <property type="term" value="P:DNA-templated transcription"/>
    <property type="evidence" value="ECO:0007669"/>
    <property type="project" value="UniProtKB-UniRule"/>
</dbReference>
<dbReference type="Gene3D" id="3.90.940.10">
    <property type="match status" value="1"/>
</dbReference>
<dbReference type="HAMAP" id="MF_00366">
    <property type="entry name" value="RNApol_bact_RpoZ"/>
    <property type="match status" value="1"/>
</dbReference>
<dbReference type="InterPro" id="IPR003716">
    <property type="entry name" value="DNA-dir_RNA_pol_omega"/>
</dbReference>
<dbReference type="InterPro" id="IPR006110">
    <property type="entry name" value="Pol_omega/Rpo6/RPB6"/>
</dbReference>
<dbReference type="InterPro" id="IPR036161">
    <property type="entry name" value="RPB6/omega-like_sf"/>
</dbReference>
<dbReference type="NCBIfam" id="TIGR00690">
    <property type="entry name" value="rpoZ"/>
    <property type="match status" value="1"/>
</dbReference>
<dbReference type="PANTHER" id="PTHR34476">
    <property type="entry name" value="DNA-DIRECTED RNA POLYMERASE SUBUNIT OMEGA"/>
    <property type="match status" value="1"/>
</dbReference>
<dbReference type="PANTHER" id="PTHR34476:SF1">
    <property type="entry name" value="DNA-DIRECTED RNA POLYMERASE SUBUNIT OMEGA"/>
    <property type="match status" value="1"/>
</dbReference>
<dbReference type="Pfam" id="PF01192">
    <property type="entry name" value="RNA_pol_Rpb6"/>
    <property type="match status" value="1"/>
</dbReference>
<dbReference type="SMART" id="SM01409">
    <property type="entry name" value="RNA_pol_Rpb6"/>
    <property type="match status" value="1"/>
</dbReference>
<dbReference type="SUPFAM" id="SSF63562">
    <property type="entry name" value="RPB6/omega subunit-like"/>
    <property type="match status" value="1"/>
</dbReference>
<keyword id="KW-0240">DNA-directed RNA polymerase</keyword>
<keyword id="KW-0548">Nucleotidyltransferase</keyword>
<keyword id="KW-0804">Transcription</keyword>
<keyword id="KW-0808">Transferase</keyword>
<gene>
    <name evidence="1" type="primary">rpoZ</name>
    <name type="ordered locus">Bamb_0860</name>
</gene>
<name>RPOZ_BURCM</name>
<reference key="1">
    <citation type="submission" date="2006-08" db="EMBL/GenBank/DDBJ databases">
        <title>Complete sequence of chromosome 1 of Burkholderia cepacia AMMD.</title>
        <authorList>
            <person name="Copeland A."/>
            <person name="Lucas S."/>
            <person name="Lapidus A."/>
            <person name="Barry K."/>
            <person name="Detter J.C."/>
            <person name="Glavina del Rio T."/>
            <person name="Hammon N."/>
            <person name="Israni S."/>
            <person name="Pitluck S."/>
            <person name="Bruce D."/>
            <person name="Chain P."/>
            <person name="Malfatti S."/>
            <person name="Shin M."/>
            <person name="Vergez L."/>
            <person name="Schmutz J."/>
            <person name="Larimer F."/>
            <person name="Land M."/>
            <person name="Hauser L."/>
            <person name="Kyrpides N."/>
            <person name="Kim E."/>
            <person name="Parke J."/>
            <person name="Coenye T."/>
            <person name="Konstantinidis K."/>
            <person name="Ramette A."/>
            <person name="Tiedje J."/>
            <person name="Richardson P."/>
        </authorList>
    </citation>
    <scope>NUCLEOTIDE SEQUENCE [LARGE SCALE GENOMIC DNA]</scope>
    <source>
        <strain>ATCC BAA-244 / DSM 16087 / CCUG 44356 / LMG 19182 / AMMD</strain>
    </source>
</reference>
<organism>
    <name type="scientific">Burkholderia ambifaria (strain ATCC BAA-244 / DSM 16087 / CCUG 44356 / LMG 19182 / AMMD)</name>
    <name type="common">Burkholderia cepacia (strain AMMD)</name>
    <dbReference type="NCBI Taxonomy" id="339670"/>
    <lineage>
        <taxon>Bacteria</taxon>
        <taxon>Pseudomonadati</taxon>
        <taxon>Pseudomonadota</taxon>
        <taxon>Betaproteobacteria</taxon>
        <taxon>Burkholderiales</taxon>
        <taxon>Burkholderiaceae</taxon>
        <taxon>Burkholderia</taxon>
        <taxon>Burkholderia cepacia complex</taxon>
    </lineage>
</organism>
<protein>
    <recommendedName>
        <fullName evidence="1">DNA-directed RNA polymerase subunit omega</fullName>
        <shortName evidence="1">RNAP omega subunit</shortName>
        <ecNumber evidence="1">2.7.7.6</ecNumber>
    </recommendedName>
    <alternativeName>
        <fullName evidence="1">RNA polymerase omega subunit</fullName>
    </alternativeName>
    <alternativeName>
        <fullName evidence="1">Transcriptase subunit omega</fullName>
    </alternativeName>
</protein>
<comment type="function">
    <text evidence="1">Promotes RNA polymerase assembly. Latches the N- and C-terminal regions of the beta' subunit thereby facilitating its interaction with the beta and alpha subunits.</text>
</comment>
<comment type="catalytic activity">
    <reaction evidence="1">
        <text>RNA(n) + a ribonucleoside 5'-triphosphate = RNA(n+1) + diphosphate</text>
        <dbReference type="Rhea" id="RHEA:21248"/>
        <dbReference type="Rhea" id="RHEA-COMP:14527"/>
        <dbReference type="Rhea" id="RHEA-COMP:17342"/>
        <dbReference type="ChEBI" id="CHEBI:33019"/>
        <dbReference type="ChEBI" id="CHEBI:61557"/>
        <dbReference type="ChEBI" id="CHEBI:140395"/>
        <dbReference type="EC" id="2.7.7.6"/>
    </reaction>
</comment>
<comment type="subunit">
    <text evidence="1">The RNAP catalytic core consists of 2 alpha, 1 beta, 1 beta' and 1 omega subunit. When a sigma factor is associated with the core the holoenzyme is formed, which can initiate transcription.</text>
</comment>
<comment type="similarity">
    <text evidence="1">Belongs to the RNA polymerase subunit omega family.</text>
</comment>
<evidence type="ECO:0000255" key="1">
    <source>
        <dbReference type="HAMAP-Rule" id="MF_00366"/>
    </source>
</evidence>
<sequence>MARITVEDCLKQIPNRFELALAATYRARQLAQGHTPKIESRDKPTVVALREIASGLVGVEMLKKVPV</sequence>